<comment type="function">
    <text evidence="1">An aminoacyl-tRNA editing enzyme that deacylates mischarged D-aminoacyl-tRNAs. Also deacylates mischarged glycyl-tRNA(Ala), protecting cells against glycine mischarging by AlaRS. Acts via tRNA-based rather than protein-based catalysis; rejects L-amino acids rather than detecting D-amino acids in the active site. By recycling D-aminoacyl-tRNA to D-amino acids and free tRNA molecules, this enzyme counteracts the toxicity associated with the formation of D-aminoacyl-tRNA entities in vivo and helps enforce protein L-homochirality.</text>
</comment>
<comment type="catalytic activity">
    <reaction evidence="1">
        <text>glycyl-tRNA(Ala) + H2O = tRNA(Ala) + glycine + H(+)</text>
        <dbReference type="Rhea" id="RHEA:53744"/>
        <dbReference type="Rhea" id="RHEA-COMP:9657"/>
        <dbReference type="Rhea" id="RHEA-COMP:13640"/>
        <dbReference type="ChEBI" id="CHEBI:15377"/>
        <dbReference type="ChEBI" id="CHEBI:15378"/>
        <dbReference type="ChEBI" id="CHEBI:57305"/>
        <dbReference type="ChEBI" id="CHEBI:78442"/>
        <dbReference type="ChEBI" id="CHEBI:78522"/>
        <dbReference type="EC" id="3.1.1.96"/>
    </reaction>
</comment>
<comment type="catalytic activity">
    <reaction evidence="1">
        <text>a D-aminoacyl-tRNA + H2O = a tRNA + a D-alpha-amino acid + H(+)</text>
        <dbReference type="Rhea" id="RHEA:13953"/>
        <dbReference type="Rhea" id="RHEA-COMP:10123"/>
        <dbReference type="Rhea" id="RHEA-COMP:10124"/>
        <dbReference type="ChEBI" id="CHEBI:15377"/>
        <dbReference type="ChEBI" id="CHEBI:15378"/>
        <dbReference type="ChEBI" id="CHEBI:59871"/>
        <dbReference type="ChEBI" id="CHEBI:78442"/>
        <dbReference type="ChEBI" id="CHEBI:79333"/>
        <dbReference type="EC" id="3.1.1.96"/>
    </reaction>
</comment>
<comment type="subunit">
    <text evidence="1">Homodimer.</text>
</comment>
<comment type="subcellular location">
    <subcellularLocation>
        <location evidence="1">Cytoplasm</location>
    </subcellularLocation>
</comment>
<comment type="domain">
    <text evidence="1">A Gly-cisPro motif from one monomer fits into the active site of the other monomer to allow specific chiral rejection of L-amino acids.</text>
</comment>
<comment type="similarity">
    <text evidence="1">Belongs to the DTD family.</text>
</comment>
<reference key="1">
    <citation type="journal article" date="2006" name="Proc. Natl. Acad. Sci. U.S.A.">
        <title>Comparative genomics of the lactic acid bacteria.</title>
        <authorList>
            <person name="Makarova K.S."/>
            <person name="Slesarev A."/>
            <person name="Wolf Y.I."/>
            <person name="Sorokin A."/>
            <person name="Mirkin B."/>
            <person name="Koonin E.V."/>
            <person name="Pavlov A."/>
            <person name="Pavlova N."/>
            <person name="Karamychev V."/>
            <person name="Polouchine N."/>
            <person name="Shakhova V."/>
            <person name="Grigoriev I."/>
            <person name="Lou Y."/>
            <person name="Rohksar D."/>
            <person name="Lucas S."/>
            <person name="Huang K."/>
            <person name="Goodstein D.M."/>
            <person name="Hawkins T."/>
            <person name="Plengvidhya V."/>
            <person name="Welker D."/>
            <person name="Hughes J."/>
            <person name="Goh Y."/>
            <person name="Benson A."/>
            <person name="Baldwin K."/>
            <person name="Lee J.-H."/>
            <person name="Diaz-Muniz I."/>
            <person name="Dosti B."/>
            <person name="Smeianov V."/>
            <person name="Wechter W."/>
            <person name="Barabote R."/>
            <person name="Lorca G."/>
            <person name="Altermann E."/>
            <person name="Barrangou R."/>
            <person name="Ganesan B."/>
            <person name="Xie Y."/>
            <person name="Rawsthorne H."/>
            <person name="Tamir D."/>
            <person name="Parker C."/>
            <person name="Breidt F."/>
            <person name="Broadbent J.R."/>
            <person name="Hutkins R."/>
            <person name="O'Sullivan D."/>
            <person name="Steele J."/>
            <person name="Unlu G."/>
            <person name="Saier M.H. Jr."/>
            <person name="Klaenhammer T."/>
            <person name="Richardson P."/>
            <person name="Kozyavkin S."/>
            <person name="Weimer B.C."/>
            <person name="Mills D.A."/>
        </authorList>
    </citation>
    <scope>NUCLEOTIDE SEQUENCE [LARGE SCALE GENOMIC DNA]</scope>
    <source>
        <strain>ATCC 8293 / DSM 20343 / BCRC 11652 / CCM 1803 / JCM 6124 / NCDO 523 / NBRC 100496 / NCIMB 8023 / NCTC 12954 / NRRL B-1118 / 37Y</strain>
    </source>
</reference>
<feature type="chain" id="PRO_1000050849" description="D-aminoacyl-tRNA deacylase">
    <location>
        <begin position="1"/>
        <end position="149"/>
    </location>
</feature>
<feature type="short sequence motif" description="Gly-cisPro motif, important for rejection of L-amino acids" evidence="1">
    <location>
        <begin position="137"/>
        <end position="138"/>
    </location>
</feature>
<accession>Q03WG3</accession>
<gene>
    <name evidence="1" type="primary">dtd</name>
    <name type="ordered locus">LEUM_1366</name>
</gene>
<organism>
    <name type="scientific">Leuconostoc mesenteroides subsp. mesenteroides (strain ATCC 8293 / DSM 20343 / BCRC 11652 / CCM 1803 / JCM 6124 / NCDO 523 / NBRC 100496 / NCIMB 8023 / NCTC 12954 / NRRL B-1118 / 37Y)</name>
    <dbReference type="NCBI Taxonomy" id="203120"/>
    <lineage>
        <taxon>Bacteria</taxon>
        <taxon>Bacillati</taxon>
        <taxon>Bacillota</taxon>
        <taxon>Bacilli</taxon>
        <taxon>Lactobacillales</taxon>
        <taxon>Lactobacillaceae</taxon>
        <taxon>Leuconostoc</taxon>
    </lineage>
</organism>
<sequence>MKVVLQRVSKASVKIDDQVKGAINKGYVLLVGVADGDEQADIDYLVRKIHNLRIFEDESGRMNRSIEDVSGAILSISQFTLFADTKKGNRPSFTKAGAPEFATVMYNQFNATLRESGLQVETGEFGADMQVSLTNDGPVTILFDTKSAQ</sequence>
<evidence type="ECO:0000255" key="1">
    <source>
        <dbReference type="HAMAP-Rule" id="MF_00518"/>
    </source>
</evidence>
<proteinExistence type="inferred from homology"/>
<dbReference type="EC" id="3.1.1.96" evidence="1"/>
<dbReference type="EMBL" id="CP000414">
    <property type="protein sequence ID" value="ABJ62459.1"/>
    <property type="molecule type" value="Genomic_DNA"/>
</dbReference>
<dbReference type="RefSeq" id="WP_011680061.1">
    <property type="nucleotide sequence ID" value="NC_008531.1"/>
</dbReference>
<dbReference type="SMR" id="Q03WG3"/>
<dbReference type="EnsemblBacteria" id="ABJ62459">
    <property type="protein sequence ID" value="ABJ62459"/>
    <property type="gene ID" value="LEUM_1366"/>
</dbReference>
<dbReference type="GeneID" id="29576946"/>
<dbReference type="KEGG" id="lme:LEUM_1366"/>
<dbReference type="eggNOG" id="COG1490">
    <property type="taxonomic scope" value="Bacteria"/>
</dbReference>
<dbReference type="HOGENOM" id="CLU_076901_1_0_9"/>
<dbReference type="Proteomes" id="UP000000362">
    <property type="component" value="Chromosome"/>
</dbReference>
<dbReference type="GO" id="GO:0005737">
    <property type="term" value="C:cytoplasm"/>
    <property type="evidence" value="ECO:0007669"/>
    <property type="project" value="UniProtKB-SubCell"/>
</dbReference>
<dbReference type="GO" id="GO:0051500">
    <property type="term" value="F:D-tyrosyl-tRNA(Tyr) deacylase activity"/>
    <property type="evidence" value="ECO:0007669"/>
    <property type="project" value="TreeGrafter"/>
</dbReference>
<dbReference type="GO" id="GO:0106026">
    <property type="term" value="F:Gly-tRNA(Ala) deacylase activity"/>
    <property type="evidence" value="ECO:0007669"/>
    <property type="project" value="UniProtKB-UniRule"/>
</dbReference>
<dbReference type="GO" id="GO:0043908">
    <property type="term" value="F:Ser(Gly)-tRNA(Ala) hydrolase activity"/>
    <property type="evidence" value="ECO:0007669"/>
    <property type="project" value="UniProtKB-UniRule"/>
</dbReference>
<dbReference type="GO" id="GO:0000049">
    <property type="term" value="F:tRNA binding"/>
    <property type="evidence" value="ECO:0007669"/>
    <property type="project" value="UniProtKB-UniRule"/>
</dbReference>
<dbReference type="GO" id="GO:0019478">
    <property type="term" value="P:D-amino acid catabolic process"/>
    <property type="evidence" value="ECO:0007669"/>
    <property type="project" value="UniProtKB-UniRule"/>
</dbReference>
<dbReference type="CDD" id="cd00563">
    <property type="entry name" value="Dtyr_deacylase"/>
    <property type="match status" value="1"/>
</dbReference>
<dbReference type="FunFam" id="3.50.80.10:FF:000001">
    <property type="entry name" value="D-aminoacyl-tRNA deacylase"/>
    <property type="match status" value="1"/>
</dbReference>
<dbReference type="Gene3D" id="3.50.80.10">
    <property type="entry name" value="D-tyrosyl-tRNA(Tyr) deacylase"/>
    <property type="match status" value="1"/>
</dbReference>
<dbReference type="HAMAP" id="MF_00518">
    <property type="entry name" value="Deacylase_Dtd"/>
    <property type="match status" value="1"/>
</dbReference>
<dbReference type="InterPro" id="IPR003732">
    <property type="entry name" value="Daa-tRNA_deacyls_DTD"/>
</dbReference>
<dbReference type="InterPro" id="IPR023509">
    <property type="entry name" value="DTD-like_sf"/>
</dbReference>
<dbReference type="NCBIfam" id="TIGR00256">
    <property type="entry name" value="D-aminoacyl-tRNA deacylase"/>
    <property type="match status" value="1"/>
</dbReference>
<dbReference type="PANTHER" id="PTHR10472:SF5">
    <property type="entry name" value="D-AMINOACYL-TRNA DEACYLASE 1"/>
    <property type="match status" value="1"/>
</dbReference>
<dbReference type="PANTHER" id="PTHR10472">
    <property type="entry name" value="D-TYROSYL-TRNA TYR DEACYLASE"/>
    <property type="match status" value="1"/>
</dbReference>
<dbReference type="Pfam" id="PF02580">
    <property type="entry name" value="Tyr_Deacylase"/>
    <property type="match status" value="1"/>
</dbReference>
<dbReference type="SUPFAM" id="SSF69500">
    <property type="entry name" value="DTD-like"/>
    <property type="match status" value="1"/>
</dbReference>
<protein>
    <recommendedName>
        <fullName evidence="1">D-aminoacyl-tRNA deacylase</fullName>
        <shortName evidence="1">DTD</shortName>
        <ecNumber evidence="1">3.1.1.96</ecNumber>
    </recommendedName>
    <alternativeName>
        <fullName evidence="1">Gly-tRNA(Ala) deacylase</fullName>
    </alternativeName>
</protein>
<keyword id="KW-0963">Cytoplasm</keyword>
<keyword id="KW-0378">Hydrolase</keyword>
<keyword id="KW-1185">Reference proteome</keyword>
<keyword id="KW-0694">RNA-binding</keyword>
<keyword id="KW-0820">tRNA-binding</keyword>
<name>DTD_LEUMM</name>